<dbReference type="EC" id="6.1.1.9"/>
<dbReference type="EMBL" id="L17342">
    <property type="protein sequence ID" value="AAA20479.1"/>
    <property type="molecule type" value="Genomic_DNA"/>
</dbReference>
<dbReference type="SMR" id="P36432"/>
<dbReference type="GO" id="GO:0005829">
    <property type="term" value="C:cytosol"/>
    <property type="evidence" value="ECO:0007669"/>
    <property type="project" value="TreeGrafter"/>
</dbReference>
<dbReference type="GO" id="GO:0005524">
    <property type="term" value="F:ATP binding"/>
    <property type="evidence" value="ECO:0007669"/>
    <property type="project" value="UniProtKB-KW"/>
</dbReference>
<dbReference type="GO" id="GO:0004832">
    <property type="term" value="F:valine-tRNA ligase activity"/>
    <property type="evidence" value="ECO:0007669"/>
    <property type="project" value="UniProtKB-EC"/>
</dbReference>
<dbReference type="GO" id="GO:0006438">
    <property type="term" value="P:valyl-tRNA aminoacylation"/>
    <property type="evidence" value="ECO:0007669"/>
    <property type="project" value="InterPro"/>
</dbReference>
<dbReference type="CDD" id="cd07962">
    <property type="entry name" value="Anticodon_Ia_Val"/>
    <property type="match status" value="1"/>
</dbReference>
<dbReference type="FunFam" id="1.10.287.380:FF:000001">
    <property type="entry name" value="Valine--tRNA ligase"/>
    <property type="match status" value="1"/>
</dbReference>
<dbReference type="FunFam" id="1.10.730.10:FF:000007">
    <property type="entry name" value="Valine--tRNA ligase"/>
    <property type="match status" value="1"/>
</dbReference>
<dbReference type="Gene3D" id="1.10.730.10">
    <property type="entry name" value="Isoleucyl-tRNA Synthetase, Domain 1"/>
    <property type="match status" value="1"/>
</dbReference>
<dbReference type="Gene3D" id="1.10.287.380">
    <property type="entry name" value="Valyl-tRNA synthetase, C-terminal domain"/>
    <property type="match status" value="1"/>
</dbReference>
<dbReference type="InterPro" id="IPR033705">
    <property type="entry name" value="Anticodon_Ia_Val"/>
</dbReference>
<dbReference type="InterPro" id="IPR013155">
    <property type="entry name" value="M/V/L/I-tRNA-synth_anticd-bd"/>
</dbReference>
<dbReference type="InterPro" id="IPR010978">
    <property type="entry name" value="tRNA-bd_arm"/>
</dbReference>
<dbReference type="InterPro" id="IPR009080">
    <property type="entry name" value="tRNAsynth_Ia_anticodon-bd"/>
</dbReference>
<dbReference type="InterPro" id="IPR037118">
    <property type="entry name" value="Val-tRNA_synth_C_sf"/>
</dbReference>
<dbReference type="InterPro" id="IPR019499">
    <property type="entry name" value="Val-tRNA_synth_tRNA-bd"/>
</dbReference>
<dbReference type="InterPro" id="IPR002303">
    <property type="entry name" value="Valyl-tRNA_ligase"/>
</dbReference>
<dbReference type="PANTHER" id="PTHR11946:SF93">
    <property type="entry name" value="VALINE--TRNA LIGASE, CHLOROPLASTIC_MITOCHONDRIAL 2"/>
    <property type="match status" value="1"/>
</dbReference>
<dbReference type="PANTHER" id="PTHR11946">
    <property type="entry name" value="VALYL-TRNA SYNTHETASES"/>
    <property type="match status" value="1"/>
</dbReference>
<dbReference type="Pfam" id="PF08264">
    <property type="entry name" value="Anticodon_1"/>
    <property type="match status" value="1"/>
</dbReference>
<dbReference type="Pfam" id="PF10458">
    <property type="entry name" value="Val_tRNA-synt_C"/>
    <property type="match status" value="1"/>
</dbReference>
<dbReference type="SUPFAM" id="SSF47323">
    <property type="entry name" value="Anticodon-binding domain of a subclass of class I aminoacyl-tRNA synthetases"/>
    <property type="match status" value="1"/>
</dbReference>
<dbReference type="SUPFAM" id="SSF52374">
    <property type="entry name" value="Nucleotidylyl transferase"/>
    <property type="match status" value="1"/>
</dbReference>
<dbReference type="SUPFAM" id="SSF46589">
    <property type="entry name" value="tRNA-binding arm"/>
    <property type="match status" value="1"/>
</dbReference>
<keyword id="KW-0030">Aminoacyl-tRNA synthetase</keyword>
<keyword id="KW-0067">ATP-binding</keyword>
<keyword id="KW-0175">Coiled coil</keyword>
<keyword id="KW-0963">Cytoplasm</keyword>
<keyword id="KW-0436">Ligase</keyword>
<keyword id="KW-0547">Nucleotide-binding</keyword>
<keyword id="KW-0648">Protein biosynthesis</keyword>
<evidence type="ECO:0000250" key="1"/>
<evidence type="ECO:0000255" key="2"/>
<evidence type="ECO:0000305" key="3"/>
<comment type="function">
    <text evidence="1">Catalyzes the attachment of valine to tRNA(Val). As ValRS can inadvertently accommodate and process structurally similar amino acids such as threonine, to avoid such errors, it has a 'posttransfer' editing activity that hydrolyzes mischarged Thr-tRNA(Val) in a tRNA-dependent manner (By similarity).</text>
</comment>
<comment type="catalytic activity">
    <reaction>
        <text>tRNA(Val) + L-valine + ATP = L-valyl-tRNA(Val) + AMP + diphosphate</text>
        <dbReference type="Rhea" id="RHEA:10704"/>
        <dbReference type="Rhea" id="RHEA-COMP:9672"/>
        <dbReference type="Rhea" id="RHEA-COMP:9708"/>
        <dbReference type="ChEBI" id="CHEBI:30616"/>
        <dbReference type="ChEBI" id="CHEBI:33019"/>
        <dbReference type="ChEBI" id="CHEBI:57762"/>
        <dbReference type="ChEBI" id="CHEBI:78442"/>
        <dbReference type="ChEBI" id="CHEBI:78537"/>
        <dbReference type="ChEBI" id="CHEBI:456215"/>
        <dbReference type="EC" id="6.1.1.9"/>
    </reaction>
</comment>
<comment type="subunit">
    <text evidence="1">Monomer.</text>
</comment>
<comment type="subcellular location">
    <subcellularLocation>
        <location evidence="1">Cytoplasm</location>
    </subcellularLocation>
</comment>
<comment type="domain">
    <text evidence="1">ValRS has two distinct active sites: one for aminoacylation and one for editing. The misactivated threonine is translocated from the active site to the editing site (By similarity).</text>
</comment>
<comment type="domain">
    <text evidence="1">The C-terminal coiled-coil domain is crucial for aminoacylation activity.</text>
</comment>
<comment type="similarity">
    <text evidence="3">Belongs to the class-I aminoacyl-tRNA synthetase family. ValS type 1 subfamily.</text>
</comment>
<sequence length="378" mass="42780">DGISLEDLLEKRTGNMMQPQLAEKIAKATRKEFVDGIAAHGTDALRFTLAALASNGRDINWDMKRLEGYRNFCNKLWNASRFVLTNDKLDLSQGEIEFSVADRWIQSEFNRTVESFRSALSQYRFDLCANAIYEFTWNQFCDWYLELTKPVFANGNAAQIRAASQTLVHVLEKLLRLAHPLIPFITEEIWQKVKGFVGITADSIMLQPFPQVEENGFDPEAEAEIEWLKEVIVAVRNIRAESNIAPSKGLDLLFRNLSAENAKILEKQTALLKAMAKLDNVQVLAANETHASVAKLVGNAELLVPMAGFINKEAELARLTKEIEKYQNEVKRIENKLSNEAFVAKAPKAVITKEREKQAEYQSGLEKIQEQYKAIEAL</sequence>
<reference key="1">
    <citation type="journal article" date="1994" name="Gene">
        <title>Organization and sequence of the HpaII restriction-modification system and adjacent genes.</title>
        <authorList>
            <person name="Kulakauskas S."/>
            <person name="Barsomian J.M."/>
            <person name="Lubys A."/>
            <person name="Roberts R.J."/>
            <person name="Wilson G.G."/>
        </authorList>
    </citation>
    <scope>NUCLEOTIDE SEQUENCE [GENOMIC DNA]</scope>
</reference>
<organism>
    <name type="scientific">Haemophilus parainfluenzae</name>
    <dbReference type="NCBI Taxonomy" id="729"/>
    <lineage>
        <taxon>Bacteria</taxon>
        <taxon>Pseudomonadati</taxon>
        <taxon>Pseudomonadota</taxon>
        <taxon>Gammaproteobacteria</taxon>
        <taxon>Pasteurellales</taxon>
        <taxon>Pasteurellaceae</taxon>
        <taxon>Haemophilus</taxon>
    </lineage>
</organism>
<protein>
    <recommendedName>
        <fullName>Valine--tRNA ligase</fullName>
        <ecNumber>6.1.1.9</ecNumber>
    </recommendedName>
    <alternativeName>
        <fullName>Valyl-tRNA synthetase</fullName>
        <shortName>ValRS</shortName>
    </alternativeName>
</protein>
<accession>P36432</accession>
<name>SYV_HAEPA</name>
<feature type="chain" id="PRO_0000106226" description="Valine--tRNA ligase">
    <location>
        <begin position="1" status="less than"/>
        <end position="378"/>
    </location>
</feature>
<feature type="coiled-coil region" evidence="2">
    <location>
        <begin position="307"/>
        <end position="377"/>
    </location>
</feature>
<feature type="non-terminal residue">
    <location>
        <position position="1"/>
    </location>
</feature>
<gene>
    <name type="primary">valS</name>
</gene>
<proteinExistence type="inferred from homology"/>